<reference key="1">
    <citation type="journal article" date="2005" name="J. Bacteriol.">
        <title>Insights on evolution of virulence and resistance from the complete genome analysis of an early methicillin-resistant Staphylococcus aureus strain and a biofilm-producing methicillin-resistant Staphylococcus epidermidis strain.</title>
        <authorList>
            <person name="Gill S.R."/>
            <person name="Fouts D.E."/>
            <person name="Archer G.L."/>
            <person name="Mongodin E.F."/>
            <person name="DeBoy R.T."/>
            <person name="Ravel J."/>
            <person name="Paulsen I.T."/>
            <person name="Kolonay J.F."/>
            <person name="Brinkac L.M."/>
            <person name="Beanan M.J."/>
            <person name="Dodson R.J."/>
            <person name="Daugherty S.C."/>
            <person name="Madupu R."/>
            <person name="Angiuoli S.V."/>
            <person name="Durkin A.S."/>
            <person name="Haft D.H."/>
            <person name="Vamathevan J.J."/>
            <person name="Khouri H."/>
            <person name="Utterback T.R."/>
            <person name="Lee C."/>
            <person name="Dimitrov G."/>
            <person name="Jiang L."/>
            <person name="Qin H."/>
            <person name="Weidman J."/>
            <person name="Tran K."/>
            <person name="Kang K.H."/>
            <person name="Hance I.R."/>
            <person name="Nelson K.E."/>
            <person name="Fraser C.M."/>
        </authorList>
    </citation>
    <scope>NUCLEOTIDE SEQUENCE [LARGE SCALE GENOMIC DNA]</scope>
    <source>
        <strain>ATCC 35984 / DSM 28319 / BCRC 17069 / CCUG 31568 / BM 3577 / RP62A</strain>
    </source>
</reference>
<evidence type="ECO:0000255" key="1">
    <source>
        <dbReference type="HAMAP-Rule" id="MF_01824"/>
    </source>
</evidence>
<gene>
    <name evidence="1" type="primary">pdxS</name>
    <name type="ordered locus">SERP0158</name>
</gene>
<accession>Q5HRN5</accession>
<name>PDXS_STAEQ</name>
<organism>
    <name type="scientific">Staphylococcus epidermidis (strain ATCC 35984 / DSM 28319 / BCRC 17069 / CCUG 31568 / BM 3577 / RP62A)</name>
    <dbReference type="NCBI Taxonomy" id="176279"/>
    <lineage>
        <taxon>Bacteria</taxon>
        <taxon>Bacillati</taxon>
        <taxon>Bacillota</taxon>
        <taxon>Bacilli</taxon>
        <taxon>Bacillales</taxon>
        <taxon>Staphylococcaceae</taxon>
        <taxon>Staphylococcus</taxon>
    </lineage>
</organism>
<comment type="function">
    <text evidence="1">Catalyzes the formation of pyridoxal 5'-phosphate from ribose 5-phosphate (RBP), glyceraldehyde 3-phosphate (G3P) and ammonia. The ammonia is provided by the PdxT subunit. Can also use ribulose 5-phosphate and dihydroxyacetone phosphate as substrates, resulting from enzyme-catalyzed isomerization of RBP and G3P, respectively.</text>
</comment>
<comment type="catalytic activity">
    <reaction evidence="1">
        <text>aldehydo-D-ribose 5-phosphate + D-glyceraldehyde 3-phosphate + L-glutamine = pyridoxal 5'-phosphate + L-glutamate + phosphate + 3 H2O + H(+)</text>
        <dbReference type="Rhea" id="RHEA:31507"/>
        <dbReference type="ChEBI" id="CHEBI:15377"/>
        <dbReference type="ChEBI" id="CHEBI:15378"/>
        <dbReference type="ChEBI" id="CHEBI:29985"/>
        <dbReference type="ChEBI" id="CHEBI:43474"/>
        <dbReference type="ChEBI" id="CHEBI:58273"/>
        <dbReference type="ChEBI" id="CHEBI:58359"/>
        <dbReference type="ChEBI" id="CHEBI:59776"/>
        <dbReference type="ChEBI" id="CHEBI:597326"/>
        <dbReference type="EC" id="4.3.3.6"/>
    </reaction>
</comment>
<comment type="pathway">
    <text evidence="1">Cofactor biosynthesis; pyridoxal 5'-phosphate biosynthesis.</text>
</comment>
<comment type="subunit">
    <text evidence="1">In the presence of PdxT, forms a dodecamer of heterodimers.</text>
</comment>
<comment type="similarity">
    <text evidence="1">Belongs to the PdxS/SNZ family.</text>
</comment>
<proteinExistence type="inferred from homology"/>
<dbReference type="EC" id="4.3.3.6" evidence="1"/>
<dbReference type="EMBL" id="CP000029">
    <property type="protein sequence ID" value="AAW53535.1"/>
    <property type="molecule type" value="Genomic_DNA"/>
</dbReference>
<dbReference type="RefSeq" id="WP_001830030.1">
    <property type="nucleotide sequence ID" value="NC_002976.3"/>
</dbReference>
<dbReference type="SMR" id="Q5HRN5"/>
<dbReference type="STRING" id="176279.SERP0158"/>
<dbReference type="GeneID" id="50019554"/>
<dbReference type="KEGG" id="ser:SERP0158"/>
<dbReference type="eggNOG" id="COG0214">
    <property type="taxonomic scope" value="Bacteria"/>
</dbReference>
<dbReference type="HOGENOM" id="CLU_055352_1_0_9"/>
<dbReference type="UniPathway" id="UPA00245"/>
<dbReference type="Proteomes" id="UP000000531">
    <property type="component" value="Chromosome"/>
</dbReference>
<dbReference type="GO" id="GO:0036381">
    <property type="term" value="F:pyridoxal 5'-phosphate synthase (glutamine hydrolysing) activity"/>
    <property type="evidence" value="ECO:0007669"/>
    <property type="project" value="UniProtKB-UniRule"/>
</dbReference>
<dbReference type="GO" id="GO:0006520">
    <property type="term" value="P:amino acid metabolic process"/>
    <property type="evidence" value="ECO:0007669"/>
    <property type="project" value="TreeGrafter"/>
</dbReference>
<dbReference type="GO" id="GO:0042823">
    <property type="term" value="P:pyridoxal phosphate biosynthetic process"/>
    <property type="evidence" value="ECO:0007669"/>
    <property type="project" value="UniProtKB-UniRule"/>
</dbReference>
<dbReference type="GO" id="GO:0008615">
    <property type="term" value="P:pyridoxine biosynthetic process"/>
    <property type="evidence" value="ECO:0007669"/>
    <property type="project" value="TreeGrafter"/>
</dbReference>
<dbReference type="CDD" id="cd04727">
    <property type="entry name" value="pdxS"/>
    <property type="match status" value="1"/>
</dbReference>
<dbReference type="FunFam" id="3.20.20.70:FF:000001">
    <property type="entry name" value="Pyridoxine biosynthesis protein PDX1"/>
    <property type="match status" value="1"/>
</dbReference>
<dbReference type="Gene3D" id="3.20.20.70">
    <property type="entry name" value="Aldolase class I"/>
    <property type="match status" value="1"/>
</dbReference>
<dbReference type="HAMAP" id="MF_01824">
    <property type="entry name" value="PdxS"/>
    <property type="match status" value="1"/>
</dbReference>
<dbReference type="InterPro" id="IPR013785">
    <property type="entry name" value="Aldolase_TIM"/>
</dbReference>
<dbReference type="InterPro" id="IPR001852">
    <property type="entry name" value="PdxS/SNZ"/>
</dbReference>
<dbReference type="InterPro" id="IPR033755">
    <property type="entry name" value="PdxS/SNZ_N"/>
</dbReference>
<dbReference type="InterPro" id="IPR011060">
    <property type="entry name" value="RibuloseP-bd_barrel"/>
</dbReference>
<dbReference type="NCBIfam" id="NF003215">
    <property type="entry name" value="PRK04180.1"/>
    <property type="match status" value="1"/>
</dbReference>
<dbReference type="NCBIfam" id="TIGR00343">
    <property type="entry name" value="pyridoxal 5'-phosphate synthase lyase subunit PdxS"/>
    <property type="match status" value="1"/>
</dbReference>
<dbReference type="PANTHER" id="PTHR31829">
    <property type="entry name" value="PYRIDOXAL 5'-PHOSPHATE SYNTHASE SUBUNIT SNZ1-RELATED"/>
    <property type="match status" value="1"/>
</dbReference>
<dbReference type="PANTHER" id="PTHR31829:SF0">
    <property type="entry name" value="PYRIDOXAL 5'-PHOSPHATE SYNTHASE SUBUNIT SNZ1-RELATED"/>
    <property type="match status" value="1"/>
</dbReference>
<dbReference type="Pfam" id="PF01680">
    <property type="entry name" value="SOR_SNZ"/>
    <property type="match status" value="1"/>
</dbReference>
<dbReference type="PIRSF" id="PIRSF029271">
    <property type="entry name" value="Pdx1"/>
    <property type="match status" value="1"/>
</dbReference>
<dbReference type="SUPFAM" id="SSF51366">
    <property type="entry name" value="Ribulose-phoshate binding barrel"/>
    <property type="match status" value="1"/>
</dbReference>
<dbReference type="PROSITE" id="PS01235">
    <property type="entry name" value="PDXS_SNZ_1"/>
    <property type="match status" value="1"/>
</dbReference>
<dbReference type="PROSITE" id="PS51129">
    <property type="entry name" value="PDXS_SNZ_2"/>
    <property type="match status" value="1"/>
</dbReference>
<protein>
    <recommendedName>
        <fullName evidence="1">Pyridoxal 5'-phosphate synthase subunit PdxS</fullName>
        <shortName evidence="1">PLP synthase subunit PdxS</shortName>
        <ecNumber evidence="1">4.3.3.6</ecNumber>
    </recommendedName>
    <alternativeName>
        <fullName evidence="1">Pdx1</fullName>
    </alternativeName>
</protein>
<feature type="chain" id="PRO_0000109418" description="Pyridoxal 5'-phosphate synthase subunit PdxS">
    <location>
        <begin position="1"/>
        <end position="295"/>
    </location>
</feature>
<feature type="active site" description="Schiff-base intermediate with D-ribose 5-phosphate" evidence="1">
    <location>
        <position position="82"/>
    </location>
</feature>
<feature type="binding site" evidence="1">
    <location>
        <position position="25"/>
    </location>
    <ligand>
        <name>D-ribose 5-phosphate</name>
        <dbReference type="ChEBI" id="CHEBI:78346"/>
    </ligand>
</feature>
<feature type="binding site" evidence="1">
    <location>
        <position position="154"/>
    </location>
    <ligand>
        <name>D-ribose 5-phosphate</name>
        <dbReference type="ChEBI" id="CHEBI:78346"/>
    </ligand>
</feature>
<feature type="binding site" evidence="1">
    <location>
        <position position="166"/>
    </location>
    <ligand>
        <name>D-glyceraldehyde 3-phosphate</name>
        <dbReference type="ChEBI" id="CHEBI:59776"/>
    </ligand>
</feature>
<feature type="binding site" evidence="1">
    <location>
        <position position="215"/>
    </location>
    <ligand>
        <name>D-ribose 5-phosphate</name>
        <dbReference type="ChEBI" id="CHEBI:78346"/>
    </ligand>
</feature>
<feature type="binding site" evidence="1">
    <location>
        <begin position="236"/>
        <end position="237"/>
    </location>
    <ligand>
        <name>D-ribose 5-phosphate</name>
        <dbReference type="ChEBI" id="CHEBI:78346"/>
    </ligand>
</feature>
<keyword id="KW-0456">Lyase</keyword>
<keyword id="KW-0663">Pyridoxal phosphate</keyword>
<keyword id="KW-1185">Reference proteome</keyword>
<keyword id="KW-0704">Schiff base</keyword>
<sequence>MSKIVGSDRVKRGMAEMQKGGVIMDVVNAEQAKIAEEAGAVAVMALERVPSDIRAAGGVARMANPKIVEEVMNAVSIPVMAKARIGHITEARVLESMGVDYIDESEVLTPADEEYHLRKDQFTVPFVCGCRNLGEAARRIGEGAAMLRTKGEPGTGNIVEAVRHMRRVNSEVSRLTVMNDDEIMTFAKDLGAPYEVLKQIKDNGRLPVVNFAAGGVATPQDAALMMELGADGVFVGSGIFKSEDPEKFAKAIVQATTHYQDYELIGKLASELGTAMKGLDINQISLEERMQERGW</sequence>